<feature type="chain" id="PRO_0000220232" description="Xaa-Pro dipeptidyl-peptidase">
    <location>
        <begin position="1"/>
        <end position="760"/>
    </location>
</feature>
<feature type="active site" description="Charge relay system" evidence="1">
    <location>
        <position position="349"/>
    </location>
</feature>
<feature type="active site" description="Charge relay system" evidence="1">
    <location>
        <position position="469"/>
    </location>
</feature>
<feature type="active site" description="Charge relay system" evidence="1">
    <location>
        <position position="499"/>
    </location>
</feature>
<name>PEPX_STRP3</name>
<accession>P0DD36</accession>
<accession>Q8K5X7</accession>
<reference key="1">
    <citation type="journal article" date="2002" name="Proc. Natl. Acad. Sci. U.S.A.">
        <title>Genome sequence of a serotype M3 strain of group A Streptococcus: phage-encoded toxins, the high-virulence phenotype, and clone emergence.</title>
        <authorList>
            <person name="Beres S.B."/>
            <person name="Sylva G.L."/>
            <person name="Barbian K.D."/>
            <person name="Lei B."/>
            <person name="Hoff J.S."/>
            <person name="Mammarella N.D."/>
            <person name="Liu M.-Y."/>
            <person name="Smoot J.C."/>
            <person name="Porcella S.F."/>
            <person name="Parkins L.D."/>
            <person name="Campbell D.S."/>
            <person name="Smith T.M."/>
            <person name="McCormick J.K."/>
            <person name="Leung D.Y.M."/>
            <person name="Schlievert P.M."/>
            <person name="Musser J.M."/>
        </authorList>
    </citation>
    <scope>NUCLEOTIDE SEQUENCE [LARGE SCALE GENOMIC DNA]</scope>
    <source>
        <strain>ATCC BAA-595 / MGAS315</strain>
    </source>
</reference>
<comment type="function">
    <text evidence="1">Removes N-terminal dipeptides sequentially from polypeptides having unsubstituted N-termini provided that the penultimate residue is proline.</text>
</comment>
<comment type="catalytic activity">
    <reaction evidence="1">
        <text>Hydrolyzes Xaa-Pro-|- bonds to release unblocked, N-terminal dipeptides from substrates including Ala-Pro-|-p-nitroanilide and (sequentially) Tyr-Pro-|-Phe-Pro-|-Gly-Pro-|-Ile.</text>
        <dbReference type="EC" id="3.4.14.11"/>
    </reaction>
</comment>
<comment type="subunit">
    <text evidence="1">Homodimer.</text>
</comment>
<comment type="subcellular location">
    <subcellularLocation>
        <location evidence="1">Cytoplasm</location>
    </subcellularLocation>
</comment>
<comment type="similarity">
    <text evidence="1">Belongs to the peptidase S15 family.</text>
</comment>
<dbReference type="EC" id="3.4.14.11" evidence="1"/>
<dbReference type="EMBL" id="AE014074">
    <property type="protein sequence ID" value="AAM80210.1"/>
    <property type="molecule type" value="Genomic_DNA"/>
</dbReference>
<dbReference type="RefSeq" id="WP_011054979.1">
    <property type="nucleotide sequence ID" value="NC_004070.1"/>
</dbReference>
<dbReference type="SMR" id="P0DD36"/>
<dbReference type="ESTHER" id="strpy-PEPXP">
    <property type="family name" value="Lactobacillus_peptidase"/>
</dbReference>
<dbReference type="KEGG" id="spg:SpyM3_1603"/>
<dbReference type="HOGENOM" id="CLU_011800_0_0_9"/>
<dbReference type="Proteomes" id="UP000000564">
    <property type="component" value="Chromosome"/>
</dbReference>
<dbReference type="GO" id="GO:0005737">
    <property type="term" value="C:cytoplasm"/>
    <property type="evidence" value="ECO:0007669"/>
    <property type="project" value="UniProtKB-SubCell"/>
</dbReference>
<dbReference type="GO" id="GO:0004177">
    <property type="term" value="F:aminopeptidase activity"/>
    <property type="evidence" value="ECO:0007669"/>
    <property type="project" value="UniProtKB-KW"/>
</dbReference>
<dbReference type="GO" id="GO:0008239">
    <property type="term" value="F:dipeptidyl-peptidase activity"/>
    <property type="evidence" value="ECO:0007669"/>
    <property type="project" value="UniProtKB-UniRule"/>
</dbReference>
<dbReference type="GO" id="GO:0008236">
    <property type="term" value="F:serine-type peptidase activity"/>
    <property type="evidence" value="ECO:0007669"/>
    <property type="project" value="UniProtKB-KW"/>
</dbReference>
<dbReference type="GO" id="GO:0006508">
    <property type="term" value="P:proteolysis"/>
    <property type="evidence" value="ECO:0007669"/>
    <property type="project" value="UniProtKB-KW"/>
</dbReference>
<dbReference type="Gene3D" id="1.10.246.70">
    <property type="match status" value="1"/>
</dbReference>
<dbReference type="Gene3D" id="3.40.50.1820">
    <property type="entry name" value="alpha/beta hydrolase"/>
    <property type="match status" value="1"/>
</dbReference>
<dbReference type="Gene3D" id="2.60.120.260">
    <property type="entry name" value="Galactose-binding domain-like"/>
    <property type="match status" value="1"/>
</dbReference>
<dbReference type="HAMAP" id="MF_00698">
    <property type="entry name" value="Aminopeptidase_S15"/>
    <property type="match status" value="1"/>
</dbReference>
<dbReference type="InterPro" id="IPR029058">
    <property type="entry name" value="AB_hydrolase_fold"/>
</dbReference>
<dbReference type="InterPro" id="IPR008979">
    <property type="entry name" value="Galactose-bd-like_sf"/>
</dbReference>
<dbReference type="InterPro" id="IPR008252">
    <property type="entry name" value="Pept_S15_Xpro"/>
</dbReference>
<dbReference type="InterPro" id="IPR015251">
    <property type="entry name" value="PepX_N_dom"/>
</dbReference>
<dbReference type="InterPro" id="IPR036313">
    <property type="entry name" value="PepX_N_dom_sf"/>
</dbReference>
<dbReference type="InterPro" id="IPR000383">
    <property type="entry name" value="Xaa-Pro-like_dom"/>
</dbReference>
<dbReference type="InterPro" id="IPR013736">
    <property type="entry name" value="Xaa-Pro_dipept_C"/>
</dbReference>
<dbReference type="InterPro" id="IPR050585">
    <property type="entry name" value="Xaa-Pro_dipeptidyl-ppase/CocE"/>
</dbReference>
<dbReference type="NCBIfam" id="NF003783">
    <property type="entry name" value="PRK05371.1-4"/>
    <property type="match status" value="1"/>
</dbReference>
<dbReference type="PANTHER" id="PTHR43056:SF10">
    <property type="entry name" value="COCE_NOND FAMILY, PUTATIVE (AFU_ORTHOLOGUE AFUA_7G00600)-RELATED"/>
    <property type="match status" value="1"/>
</dbReference>
<dbReference type="PANTHER" id="PTHR43056">
    <property type="entry name" value="PEPTIDASE S9 PROLYL OLIGOPEPTIDASE"/>
    <property type="match status" value="1"/>
</dbReference>
<dbReference type="Pfam" id="PF02129">
    <property type="entry name" value="Peptidase_S15"/>
    <property type="match status" value="1"/>
</dbReference>
<dbReference type="Pfam" id="PF08530">
    <property type="entry name" value="PepX_C"/>
    <property type="match status" value="1"/>
</dbReference>
<dbReference type="Pfam" id="PF09168">
    <property type="entry name" value="PepX_N"/>
    <property type="match status" value="1"/>
</dbReference>
<dbReference type="PRINTS" id="PR00923">
    <property type="entry name" value="LACTOPTASE"/>
</dbReference>
<dbReference type="SMART" id="SM00939">
    <property type="entry name" value="PepX_C"/>
    <property type="match status" value="1"/>
</dbReference>
<dbReference type="SMART" id="SM00940">
    <property type="entry name" value="PepX_N"/>
    <property type="match status" value="1"/>
</dbReference>
<dbReference type="SUPFAM" id="SSF53474">
    <property type="entry name" value="alpha/beta-Hydrolases"/>
    <property type="match status" value="1"/>
</dbReference>
<dbReference type="SUPFAM" id="SSF49785">
    <property type="entry name" value="Galactose-binding domain-like"/>
    <property type="match status" value="1"/>
</dbReference>
<dbReference type="SUPFAM" id="SSF81761">
    <property type="entry name" value="X-Prolyl dipeptidyl aminopeptidase PepX, N-terminal domain"/>
    <property type="match status" value="1"/>
</dbReference>
<gene>
    <name evidence="1" type="primary">pepX</name>
    <name type="synonym">pepXP</name>
    <name type="ordered locus">SpyM3_1603</name>
</gene>
<organism>
    <name type="scientific">Streptococcus pyogenes serotype M3 (strain ATCC BAA-595 / MGAS315)</name>
    <dbReference type="NCBI Taxonomy" id="198466"/>
    <lineage>
        <taxon>Bacteria</taxon>
        <taxon>Bacillati</taxon>
        <taxon>Bacillota</taxon>
        <taxon>Bacilli</taxon>
        <taxon>Lactobacillales</taxon>
        <taxon>Streptococcaceae</taxon>
        <taxon>Streptococcus</taxon>
    </lineage>
</organism>
<protein>
    <recommendedName>
        <fullName evidence="1">Xaa-Pro dipeptidyl-peptidase</fullName>
        <ecNumber evidence="1">3.4.14.11</ecNumber>
    </recommendedName>
    <alternativeName>
        <fullName evidence="1">X-Pro dipeptidyl-peptidase</fullName>
    </alternativeName>
    <alternativeName>
        <fullName evidence="1">X-prolyl-dipeptidyl aminopeptidase</fullName>
        <shortName evidence="1">X-PDAP</shortName>
    </alternativeName>
</protein>
<proteinExistence type="inferred from homology"/>
<evidence type="ECO:0000255" key="1">
    <source>
        <dbReference type="HAMAP-Rule" id="MF_00698"/>
    </source>
</evidence>
<sequence>MRYNQFSYIPTSLERAAEELKELGFDLDLQKTAKANLESFLRKLFFHYPDSDYPLSHLIAKNDMDALSFFQSEQELSKEVFDLLALQVLGFIPGVDFTEADAFLDKLAFPIHFDETEIIKHIHHLLATRCKSGMTLIDDLVSQGMLTMDNDYHFFNGKSLATFDTSQLIREVVYVEAPLDTDQDGQLDLIKVNIIRPQSQKPLPTLMTPSPYHQGINEVANDKKLYRMEKELVVKKRRQITVEDRDFIPLETQPCKLPIGQNLESFSYINSYSLNDYFLARGFANIYVSGVGTAGSTGFMTSGDYAQIESFKAVIDWLNGRATAYTSHSKTHQVRADWANGLVCTTGKSYLGTMSTGLATTGVDGLAMIIAESAISSWYNYYRENGLVCSPGGYPGEDLDVLTELTYSRNLLAGDYLRHNDRYQELLNQQSQALDRQSGDYNQFWHDRNYLKNAHQIKCDVVYTHGLQDWNVKPRQVYEIVNALPSTINKHLFLHQGEHVYMHNWQSIDFRESMNALLCQKLLGLANDFSLPEMIWQDNTCPQNWQERKVFGTSTIKELDLGQELLLIDNHYGEDEFKAYGKDFRAFKAALFKGKANQALVDILLEEDLLINGEIVLQLKVKSSENKGLLSAQILDYGKKKRLGDLPIALTQSSIDNGQNFSREPLKELPFRENSYRVISKGFMNLQNRNNLSSIETIPNNKWMTVRLPLQPTIYHLEKGDTLRVILYTTDFEHTVRDNSNYALTIDLSQSQLIVPIASN</sequence>
<keyword id="KW-0031">Aminopeptidase</keyword>
<keyword id="KW-0963">Cytoplasm</keyword>
<keyword id="KW-0378">Hydrolase</keyword>
<keyword id="KW-0645">Protease</keyword>
<keyword id="KW-0720">Serine protease</keyword>